<comment type="function">
    <text evidence="1 2">Seems to play a role in epithelial tight junction formation. Appears early in primordial forms of cell junctions and recruits PARD3. The association of the PARD6-PARD3 complex may prevent the interaction of PARD3 with JAM1, thereby preventing tight junction assembly. Plays a role in regulating monocyte transmigration involved in integrity of epithelial barrier. Ligand for integrin alpha-L/beta-2 involved in memory T-cell and neutrophil transmigration. Involved in platelet activation.</text>
</comment>
<comment type="function">
    <text evidence="6 7">(Microbial infection) Acts as a functional receptor for murine norovirus.</text>
</comment>
<comment type="function">
    <text evidence="5">(Microbial infection) In case of orthoreovirus infection, serves as receptor for the virus.</text>
</comment>
<comment type="subunit">
    <text evidence="1 2">Interacts with the ninth PDZ domain of MPDZ. Interacts with the first PDZ domain of PARD3. The association between PARD3 and PARD6B probably disrupts this interaction. Interacts with ITGAL (via I-domain). Interacts with CD151.</text>
</comment>
<comment type="subunit">
    <text evidence="6 7">(Microbial infection) Interacts with calicivirus capsid protein.</text>
</comment>
<comment type="subunit">
    <text evidence="5">(Microbial infection) Interacts with the orthoreovirus sigma-1 capsid protein.</text>
</comment>
<comment type="subcellular location">
    <subcellularLocation>
        <location evidence="2">Cell junction</location>
        <location evidence="2">Tight junction</location>
    </subcellularLocation>
    <subcellularLocation>
        <location evidence="2">Cell membrane</location>
        <topology evidence="2">Single-pass type I membrane protein</topology>
    </subcellularLocation>
    <text evidence="2">Localized at tight junctions of both epithelial and endothelial cells.</text>
</comment>
<comment type="domain">
    <text evidence="2">The Ig-like V-type 2 domain is necessary and sufficient for interaction with integrin alpha-L/beta-2.</text>
</comment>
<comment type="similarity">
    <text evidence="8">Belongs to the immunoglobulin superfamily.</text>
</comment>
<gene>
    <name type="primary">F11R</name>
    <name type="synonym">JAM1</name>
</gene>
<evidence type="ECO:0000250" key="1">
    <source>
        <dbReference type="UniProtKB" id="O88792"/>
    </source>
</evidence>
<evidence type="ECO:0000250" key="2">
    <source>
        <dbReference type="UniProtKB" id="Q9Y624"/>
    </source>
</evidence>
<evidence type="ECO:0000255" key="3"/>
<evidence type="ECO:0000255" key="4">
    <source>
        <dbReference type="PROSITE-ProRule" id="PRU00114"/>
    </source>
</evidence>
<evidence type="ECO:0000269" key="5">
    <source>
    </source>
</evidence>
<evidence type="ECO:0000269" key="6">
    <source>
    </source>
</evidence>
<evidence type="ECO:0000269" key="7">
    <source>
    </source>
</evidence>
<evidence type="ECO:0000305" key="8"/>
<accession>Q2WGK2</accession>
<dbReference type="EMBL" id="AB196140">
    <property type="protein sequence ID" value="BAE53637.1"/>
    <property type="molecule type" value="mRNA"/>
</dbReference>
<dbReference type="RefSeq" id="NP_001032953.1">
    <property type="nucleotide sequence ID" value="NM_001037864.2"/>
</dbReference>
<dbReference type="PDB" id="6GSI">
    <property type="method" value="EM"/>
    <property type="resolution" value="3.75 A"/>
    <property type="chains" value="E/F/G/H=29-230"/>
</dbReference>
<dbReference type="PDBsum" id="6GSI"/>
<dbReference type="EMDB" id="EMD-0056"/>
<dbReference type="SMR" id="Q2WGK2"/>
<dbReference type="STRING" id="9685.ENSFCAP00000043314"/>
<dbReference type="GlyCosmos" id="Q2WGK2">
    <property type="glycosylation" value="1 site, No reported glycans"/>
</dbReference>
<dbReference type="PaxDb" id="9685-ENSFCAP00000019749"/>
<dbReference type="Ensembl" id="ENSFCAT00000032483.4">
    <property type="protein sequence ID" value="ENSFCAP00000019749.3"/>
    <property type="gene ID" value="ENSFCAG00000023544.4"/>
</dbReference>
<dbReference type="GeneID" id="653015"/>
<dbReference type="KEGG" id="fca:653015"/>
<dbReference type="CTD" id="50848"/>
<dbReference type="VGNC" id="VGNC:109510">
    <property type="gene designation" value="F11R"/>
</dbReference>
<dbReference type="eggNOG" id="ENOG502QWVN">
    <property type="taxonomic scope" value="Eukaryota"/>
</dbReference>
<dbReference type="GeneTree" id="ENSGT00940000159186"/>
<dbReference type="HOGENOM" id="CLU_067351_0_0_1"/>
<dbReference type="InParanoid" id="Q2WGK2"/>
<dbReference type="OrthoDB" id="10031887at2759"/>
<dbReference type="Proteomes" id="UP000011712">
    <property type="component" value="Chromosome F1"/>
</dbReference>
<dbReference type="Bgee" id="ENSFCAG00000023544">
    <property type="expression patterns" value="Expressed in zone of skin and 10 other cell types or tissues"/>
</dbReference>
<dbReference type="GO" id="GO:0005923">
    <property type="term" value="C:bicellular tight junction"/>
    <property type="evidence" value="ECO:0000318"/>
    <property type="project" value="GO_Central"/>
</dbReference>
<dbReference type="GO" id="GO:0005886">
    <property type="term" value="C:plasma membrane"/>
    <property type="evidence" value="ECO:0007669"/>
    <property type="project" value="UniProtKB-SubCell"/>
</dbReference>
<dbReference type="GO" id="GO:0001618">
    <property type="term" value="F:virus receptor activity"/>
    <property type="evidence" value="ECO:0007669"/>
    <property type="project" value="UniProtKB-KW"/>
</dbReference>
<dbReference type="GO" id="GO:0007155">
    <property type="term" value="P:cell adhesion"/>
    <property type="evidence" value="ECO:0007669"/>
    <property type="project" value="InterPro"/>
</dbReference>
<dbReference type="GO" id="GO:0090557">
    <property type="term" value="P:establishment of endothelial intestinal barrier"/>
    <property type="evidence" value="ECO:0000318"/>
    <property type="project" value="GO_Central"/>
</dbReference>
<dbReference type="GO" id="GO:0050892">
    <property type="term" value="P:intestinal absorption"/>
    <property type="evidence" value="ECO:0000318"/>
    <property type="project" value="GO_Central"/>
</dbReference>
<dbReference type="GO" id="GO:0090559">
    <property type="term" value="P:regulation of membrane permeability"/>
    <property type="evidence" value="ECO:0000318"/>
    <property type="project" value="GO_Central"/>
</dbReference>
<dbReference type="FunFam" id="2.60.40.10:FF:000342">
    <property type="entry name" value="Junctional adhesion molecule A"/>
    <property type="match status" value="1"/>
</dbReference>
<dbReference type="FunFam" id="2.60.40.10:FF:000906">
    <property type="entry name" value="Junctional adhesion molecule A"/>
    <property type="match status" value="1"/>
</dbReference>
<dbReference type="Gene3D" id="2.60.40.10">
    <property type="entry name" value="Immunoglobulins"/>
    <property type="match status" value="2"/>
</dbReference>
<dbReference type="InterPro" id="IPR042456">
    <property type="entry name" value="F11R"/>
</dbReference>
<dbReference type="InterPro" id="IPR007110">
    <property type="entry name" value="Ig-like_dom"/>
</dbReference>
<dbReference type="InterPro" id="IPR036179">
    <property type="entry name" value="Ig-like_dom_sf"/>
</dbReference>
<dbReference type="InterPro" id="IPR013783">
    <property type="entry name" value="Ig-like_fold"/>
</dbReference>
<dbReference type="InterPro" id="IPR003599">
    <property type="entry name" value="Ig_sub"/>
</dbReference>
<dbReference type="InterPro" id="IPR003598">
    <property type="entry name" value="Ig_sub2"/>
</dbReference>
<dbReference type="InterPro" id="IPR013106">
    <property type="entry name" value="Ig_V-set"/>
</dbReference>
<dbReference type="PANTHER" id="PTHR45113">
    <property type="entry name" value="JUNCTIONAL ADHESION MOLECULE A"/>
    <property type="match status" value="1"/>
</dbReference>
<dbReference type="PANTHER" id="PTHR45113:SF1">
    <property type="entry name" value="JUNCTIONAL ADHESION MOLECULE A"/>
    <property type="match status" value="1"/>
</dbReference>
<dbReference type="Pfam" id="PF13927">
    <property type="entry name" value="Ig_3"/>
    <property type="match status" value="1"/>
</dbReference>
<dbReference type="Pfam" id="PF07686">
    <property type="entry name" value="V-set"/>
    <property type="match status" value="1"/>
</dbReference>
<dbReference type="SMART" id="SM00409">
    <property type="entry name" value="IG"/>
    <property type="match status" value="2"/>
</dbReference>
<dbReference type="SMART" id="SM00408">
    <property type="entry name" value="IGc2"/>
    <property type="match status" value="2"/>
</dbReference>
<dbReference type="SMART" id="SM00406">
    <property type="entry name" value="IGv"/>
    <property type="match status" value="1"/>
</dbReference>
<dbReference type="SUPFAM" id="SSF48726">
    <property type="entry name" value="Immunoglobulin"/>
    <property type="match status" value="2"/>
</dbReference>
<dbReference type="PROSITE" id="PS50835">
    <property type="entry name" value="IG_LIKE"/>
    <property type="match status" value="2"/>
</dbReference>
<keyword id="KW-0002">3D-structure</keyword>
<keyword id="KW-0965">Cell junction</keyword>
<keyword id="KW-1003">Cell membrane</keyword>
<keyword id="KW-1015">Disulfide bond</keyword>
<keyword id="KW-0325">Glycoprotein</keyword>
<keyword id="KW-1183">Host cell receptor for virus entry</keyword>
<keyword id="KW-0945">Host-virus interaction</keyword>
<keyword id="KW-0393">Immunoglobulin domain</keyword>
<keyword id="KW-0472">Membrane</keyword>
<keyword id="KW-0597">Phosphoprotein</keyword>
<keyword id="KW-0675">Receptor</keyword>
<keyword id="KW-1185">Reference proteome</keyword>
<keyword id="KW-0677">Repeat</keyword>
<keyword id="KW-0732">Signal</keyword>
<keyword id="KW-0796">Tight junction</keyword>
<keyword id="KW-0812">Transmembrane</keyword>
<keyword id="KW-1133">Transmembrane helix</keyword>
<feature type="signal peptide" evidence="3">
    <location>
        <begin position="1"/>
        <end position="28"/>
    </location>
</feature>
<feature type="chain" id="PRO_0000226724" description="Junctional adhesion molecule A">
    <location>
        <begin position="29"/>
        <end position="298"/>
    </location>
</feature>
<feature type="topological domain" description="Extracellular" evidence="3">
    <location>
        <begin position="29"/>
        <end position="237"/>
    </location>
</feature>
<feature type="transmembrane region" description="Helical" evidence="3">
    <location>
        <begin position="238"/>
        <end position="258"/>
    </location>
</feature>
<feature type="topological domain" description="Cytoplasmic" evidence="3">
    <location>
        <begin position="259"/>
        <end position="298"/>
    </location>
</feature>
<feature type="domain" description="Ig-like V-type 1">
    <location>
        <begin position="29"/>
        <end position="126"/>
    </location>
</feature>
<feature type="domain" description="Ig-like V-type 2">
    <location>
        <begin position="134"/>
        <end position="227"/>
    </location>
</feature>
<feature type="modified residue" description="Phosphoserine" evidence="2">
    <location>
        <position position="280"/>
    </location>
</feature>
<feature type="modified residue" description="Phosphoserine" evidence="2">
    <location>
        <position position="286"/>
    </location>
</feature>
<feature type="glycosylation site" description="N-linked (GlcNAc...) asparagine" evidence="3">
    <location>
        <position position="184"/>
    </location>
</feature>
<feature type="disulfide bond" evidence="4">
    <location>
        <begin position="49"/>
        <end position="108"/>
    </location>
</feature>
<feature type="disulfide bond" evidence="4">
    <location>
        <begin position="152"/>
        <end position="211"/>
    </location>
</feature>
<feature type="mutagenesis site" description="60% loss of FCV capsid binding." evidence="7">
    <original>D</original>
    <variation>N</variation>
    <location>
        <position position="42"/>
    </location>
</feature>
<feature type="mutagenesis site" description="80% loss of FCV capsid binding." evidence="7">
    <original>K</original>
    <variation>N</variation>
    <location>
        <position position="43"/>
    </location>
</feature>
<feature type="mutagenesis site" description="50% loss of FCV capsid binding." evidence="7">
    <original>S</original>
    <variation>A</variation>
    <location>
        <position position="97"/>
    </location>
</feature>
<reference key="1">
    <citation type="journal article" date="2006" name="J. Virol.">
        <title>Junctional adhesion molecule 1 is a functional receptor for feline calicivirus.</title>
        <authorList>
            <person name="Makino A."/>
            <person name="Shimojima M."/>
            <person name="Miyazawa T."/>
            <person name="Kato K."/>
            <person name="Tohya Y."/>
            <person name="Akashi H."/>
        </authorList>
    </citation>
    <scope>NUCLEOTIDE SEQUENCE [MRNA]</scope>
    <scope>FUNCTION (MICROBIAL INFECTION)</scope>
</reference>
<reference key="2">
    <citation type="journal article" date="2007" name="J. Virol.">
        <title>Identification of regions and residues in feline junctional adhesion molecule required for feline calicivirus binding and infection.</title>
        <authorList>
            <person name="Ossiboff R.J."/>
            <person name="Parker J.S.L."/>
        </authorList>
    </citation>
    <scope>FUNCTION (MICROBIAL INFECTION)</scope>
    <scope>MUTAGENESIS OF ASP-42; LYS-43 AND SER-97</scope>
</reference>
<reference key="3">
    <citation type="journal article" date="2001" name="Cell">
        <title>Junction adhesion molecule is a receptor for reovirus.</title>
        <authorList>
            <person name="Barton E.S."/>
            <person name="Forrest J.C."/>
            <person name="Connolly J.L."/>
            <person name="Chappell J.D."/>
            <person name="Liu Y."/>
            <person name="Schnell F.J."/>
            <person name="Nusrat A."/>
            <person name="Parkos C.A."/>
            <person name="Dermody T.S."/>
        </authorList>
    </citation>
    <scope>FUNCTION (MICROBIAL INFECTION)</scope>
    <scope>INTERACTION WITH ORTHOREOVIRUS SIGMA-1 PROTEIN (MICROBIAL INFECTION)</scope>
</reference>
<proteinExistence type="evidence at protein level"/>
<sequence length="298" mass="32579">MGTEARAGRRQLLVFTSVVLSSLALGRGAVYTSEPDVRVPEDKPAKLSCSYSGFSNPRVEWKFAHGDITSLVCYKNKITASYADRVTFSHSGITFHSVTRKDTGTYTCMVSDDGGNTYGEVSVQLTVLVPPSKPTVHIPSSATIGSRAVLTCSEKDGSPPSEYYWFKDGVRMPLEPKGNRAFSNSSYSLNEKTGELVFDPVSAWDTGEYTCEAQNGYGMPMRSEAVRMEAAELNVGGIVAAVLVTLILLGFLILGIWFAYRRGYFDRTKKGTSSKKVIYSQPAARSEGEFRQTSSFLV</sequence>
<organism>
    <name type="scientific">Felis catus</name>
    <name type="common">Cat</name>
    <name type="synonym">Felis silvestris catus</name>
    <dbReference type="NCBI Taxonomy" id="9685"/>
    <lineage>
        <taxon>Eukaryota</taxon>
        <taxon>Metazoa</taxon>
        <taxon>Chordata</taxon>
        <taxon>Craniata</taxon>
        <taxon>Vertebrata</taxon>
        <taxon>Euteleostomi</taxon>
        <taxon>Mammalia</taxon>
        <taxon>Eutheria</taxon>
        <taxon>Laurasiatheria</taxon>
        <taxon>Carnivora</taxon>
        <taxon>Feliformia</taxon>
        <taxon>Felidae</taxon>
        <taxon>Felinae</taxon>
        <taxon>Felis</taxon>
    </lineage>
</organism>
<protein>
    <recommendedName>
        <fullName>Junctional adhesion molecule A</fullName>
        <shortName>JAM-A</shortName>
    </recommendedName>
    <alternativeName>
        <fullName>Junctional adhesion molecule 1</fullName>
        <shortName>JAM-1</shortName>
    </alternativeName>
    <cdAntigenName>CD321</cdAntigenName>
</protein>
<name>JAM1_FELCA</name>